<proteinExistence type="evidence at transcript level"/>
<gene>
    <name type="primary">EGFR</name>
</gene>
<accession>P55245</accession>
<accession>F6YXS7</accession>
<accession>G7ML99</accession>
<accession>H9FAB2</accession>
<sequence length="1210" mass="134350">MRPSGTAGAALLALLAALCPASRALEEKKVCQGTSNKLTQLGTFEDHFLSLQRMFNNCEVVLGNLEITYVQRNYDLSFLKTIQEVAGYVLIALNTVERIPLENLQIIRGNMYYENSYALAVLSNYDANKTGLKELPMRNLQEILHGAVRFSNNPALCNVESIQWRDIVSSEFLSNMSMDFQNHLGSCQKCDPSCPNGSCWGAGEENCQKLTKIICAQQCSGRCRGKSPSDCCHNQCAAGCTGPRESDCLVCRKFRDEATCKDTCPPLMLYNPTTYQMDVNPEGKYSFGATCVKKCPRNYVVTDHGSCVRACGADSYEMEEDGVRKCKKCEGPCRKVCNGIGIGEFKDTLSINATNIKHFKNCTSISGDLHILPVAFRGDSFTHTPPLDPQELDILKTVKEITGFLLIQAWPENRTDLHAFENLEIIRGRTKQHGQFSLAVVSLNITSLGLRSLKEISDGDVIISGNKNLCYANTINWKKLFGTSSQKTKIISNRGENSCKATGQVCHALCSPEGCWGPEPRDCVSCQNVSRGRECVDKCNVLEGEPREFVENSECIQCHPECLPQVMNITCTGRGPDNCIQCAHYIDGPHCVKTCPAGVMGENNTLVWKYADAGHVCHLCHPNCTYGCTGPGLEGCARNGPKIPSIATGMVGALLLLLVVALGIGLFMRRRHIVRKRTLRRLLQERELVEPLTPSGEAPNQALLRILKETEFKKIKVLGSGAFGTVYKGLWIPEGEKVKIPVAIKELREATSPKANKEILDEAYVMASVDNPHVCRLLGICLTSTVQLITQLMPFGCLLDYVREHKDNIGSQYLLNWCVQIAKGMNYLEDRRLVHRDLAARNVLVKTPQHVKITDFGLAKLLGAEEKEYHAEGGKVPIKWMALESILHRIYTHQSDVWSYGVTVWELMTFGSKPYDGIPASEISSILEKGERLPQPPICTIDVYMIMVKCWMIDADSRPKFRELIIEFSKMARDPQRYLVIQGDERMHLPSPTDSNFYRALMDEEDMDDVVDADEYLIPQQGFFSSPSTSRTPLLSSLSATSNNSTVACIDRNGLQSCPIKEDSFLQRYSSDPTGALTEDSIDDTFLPVPEYINQSVPKRPAGSVQNPVYHNQPLNPAPSRDPHYQDPHSTAVGNPEYLNTVQPTCVNSTFDSPAHWAQKGSHQISLDNPDYQQDFFPKEAKPNGIFKGSTAENAEYLRVAPQSSEFIGA</sequence>
<keyword id="KW-0067">ATP-binding</keyword>
<keyword id="KW-1003">Cell membrane</keyword>
<keyword id="KW-1015">Disulfide bond</keyword>
<keyword id="KW-0256">Endoplasmic reticulum</keyword>
<keyword id="KW-0967">Endosome</keyword>
<keyword id="KW-0325">Glycoprotein</keyword>
<keyword id="KW-0333">Golgi apparatus</keyword>
<keyword id="KW-0379">Hydroxylation</keyword>
<keyword id="KW-1017">Isopeptide bond</keyword>
<keyword id="KW-0418">Kinase</keyword>
<keyword id="KW-0449">Lipoprotein</keyword>
<keyword id="KW-0472">Membrane</keyword>
<keyword id="KW-0488">Methylation</keyword>
<keyword id="KW-0547">Nucleotide-binding</keyword>
<keyword id="KW-0539">Nucleus</keyword>
<keyword id="KW-0564">Palmitate</keyword>
<keyword id="KW-0597">Phosphoprotein</keyword>
<keyword id="KW-0675">Receptor</keyword>
<keyword id="KW-1185">Reference proteome</keyword>
<keyword id="KW-0677">Repeat</keyword>
<keyword id="KW-0732">Signal</keyword>
<keyword id="KW-0808">Transferase</keyword>
<keyword id="KW-0812">Transmembrane</keyword>
<keyword id="KW-1133">Transmembrane helix</keyword>
<keyword id="KW-0829">Tyrosine-protein kinase</keyword>
<keyword id="KW-0832">Ubl conjugation</keyword>
<organism>
    <name type="scientific">Macaca mulatta</name>
    <name type="common">Rhesus macaque</name>
    <dbReference type="NCBI Taxonomy" id="9544"/>
    <lineage>
        <taxon>Eukaryota</taxon>
        <taxon>Metazoa</taxon>
        <taxon>Chordata</taxon>
        <taxon>Craniata</taxon>
        <taxon>Vertebrata</taxon>
        <taxon>Euteleostomi</taxon>
        <taxon>Mammalia</taxon>
        <taxon>Eutheria</taxon>
        <taxon>Euarchontoglires</taxon>
        <taxon>Primates</taxon>
        <taxon>Haplorrhini</taxon>
        <taxon>Catarrhini</taxon>
        <taxon>Cercopithecidae</taxon>
        <taxon>Cercopithecinae</taxon>
        <taxon>Macaca</taxon>
    </lineage>
</organism>
<feature type="signal peptide" evidence="2">
    <location>
        <begin position="1"/>
        <end position="24"/>
    </location>
</feature>
<feature type="chain" id="PRO_0000160254" description="Epidermal growth factor receptor">
    <location>
        <begin position="25"/>
        <end position="1210"/>
    </location>
</feature>
<feature type="topological domain" description="Extracellular" evidence="4">
    <location>
        <begin position="25"/>
        <end position="645"/>
    </location>
</feature>
<feature type="transmembrane region" description="Helical" evidence="4">
    <location>
        <begin position="646"/>
        <end position="668"/>
    </location>
</feature>
<feature type="topological domain" description="Cytoplasmic" evidence="4">
    <location>
        <begin position="669"/>
        <end position="1210"/>
    </location>
</feature>
<feature type="repeat" description="Approximate">
    <location>
        <begin position="75"/>
        <end position="300"/>
    </location>
</feature>
<feature type="repeat" description="Approximate">
    <location>
        <begin position="390"/>
        <end position="600"/>
    </location>
</feature>
<feature type="domain" description="Protein kinase" evidence="5">
    <location>
        <begin position="712"/>
        <end position="979"/>
    </location>
</feature>
<feature type="region of interest" description="Important for dimerization, phosphorylation and activation" evidence="1">
    <location>
        <begin position="688"/>
        <end position="704"/>
    </location>
</feature>
<feature type="region of interest" description="Disordered" evidence="7">
    <location>
        <begin position="1097"/>
        <end position="1137"/>
    </location>
</feature>
<feature type="compositionally biased region" description="Polar residues" evidence="7">
    <location>
        <begin position="1104"/>
        <end position="1115"/>
    </location>
</feature>
<feature type="compositionally biased region" description="Polar residues" evidence="7">
    <location>
        <begin position="1128"/>
        <end position="1137"/>
    </location>
</feature>
<feature type="active site" description="Proton acceptor" evidence="5 6">
    <location>
        <position position="837"/>
    </location>
</feature>
<feature type="binding site" evidence="5">
    <location>
        <begin position="718"/>
        <end position="726"/>
    </location>
    <ligand>
        <name>ATP</name>
        <dbReference type="ChEBI" id="CHEBI:30616"/>
    </ligand>
</feature>
<feature type="binding site" evidence="5">
    <location>
        <position position="745"/>
    </location>
    <ligand>
        <name>ATP</name>
        <dbReference type="ChEBI" id="CHEBI:30616"/>
    </ligand>
</feature>
<feature type="binding site" evidence="5">
    <location>
        <begin position="790"/>
        <end position="791"/>
    </location>
    <ligand>
        <name>ATP</name>
        <dbReference type="ChEBI" id="CHEBI:30616"/>
    </ligand>
</feature>
<feature type="binding site" evidence="5">
    <location>
        <position position="855"/>
    </location>
    <ligand>
        <name>ATP</name>
        <dbReference type="ChEBI" id="CHEBI:30616"/>
    </ligand>
</feature>
<feature type="site" description="Important for interaction with PIK3C2B" evidence="1">
    <location>
        <position position="1016"/>
    </location>
</feature>
<feature type="modified residue" description="Phosphoserine" evidence="2">
    <location>
        <position position="229"/>
    </location>
</feature>
<feature type="modified residue" description="Phosphothreonine; by PKC and PKD/PRKD1" evidence="2">
    <location>
        <position position="678"/>
    </location>
</feature>
<feature type="modified residue" description="Phosphothreonine; by PKD/PRKD1" evidence="2">
    <location>
        <position position="693"/>
    </location>
</feature>
<feature type="modified residue" description="Phosphoserine" evidence="2">
    <location>
        <position position="695"/>
    </location>
</feature>
<feature type="modified residue" description="N6-(2-hydroxyisobutyryl)lysine" evidence="2">
    <location>
        <position position="745"/>
    </location>
</feature>
<feature type="modified residue" description="Phosphotyrosine" evidence="2">
    <location>
        <position position="869"/>
    </location>
</feature>
<feature type="modified residue" description="Phosphoserine" evidence="2">
    <location>
        <position position="991"/>
    </location>
</feature>
<feature type="modified residue" description="Phosphoserine" evidence="2">
    <location>
        <position position="995"/>
    </location>
</feature>
<feature type="modified residue" description="Phosphotyrosine; by autocatalysis" evidence="2">
    <location>
        <position position="998"/>
    </location>
</feature>
<feature type="modified residue" description="Phosphotyrosine; by autocatalysis" evidence="2">
    <location>
        <position position="1016"/>
    </location>
</feature>
<feature type="modified residue" description="Phosphoserine" evidence="2">
    <location>
        <position position="1026"/>
    </location>
</feature>
<feature type="modified residue" description="Phosphoserine" evidence="2">
    <location>
        <position position="1039"/>
    </location>
</feature>
<feature type="modified residue" description="Phosphothreonine" evidence="2">
    <location>
        <position position="1041"/>
    </location>
</feature>
<feature type="modified residue" description="Phosphoserine" evidence="2">
    <location>
        <position position="1042"/>
    </location>
</feature>
<feature type="modified residue" description="Phosphoserine" evidence="2">
    <location>
        <position position="1064"/>
    </location>
</feature>
<feature type="modified residue" description="Phosphotyrosine" evidence="2">
    <location>
        <position position="1069"/>
    </location>
</feature>
<feature type="modified residue" description="Phosphoserine" evidence="2">
    <location>
        <position position="1070"/>
    </location>
</feature>
<feature type="modified residue" description="Phosphoserine" evidence="2">
    <location>
        <position position="1071"/>
    </location>
</feature>
<feature type="modified residue" description="Phosphoserine" evidence="2">
    <location>
        <position position="1081"/>
    </location>
</feature>
<feature type="modified residue" description="Phosphotyrosine; by autocatalysis" evidence="2">
    <location>
        <position position="1092"/>
    </location>
</feature>
<feature type="modified residue" description="Phosphotyrosine; by autocatalysis" evidence="2">
    <location>
        <position position="1110"/>
    </location>
</feature>
<feature type="modified residue" description="Phosphoserine" evidence="2">
    <location>
        <position position="1166"/>
    </location>
</feature>
<feature type="modified residue" description="Phosphotyrosine; by autocatalysis" evidence="2">
    <location>
        <position position="1172"/>
    </location>
</feature>
<feature type="modified residue" description="Phosphotyrosine; by autocatalysis" evidence="2">
    <location>
        <position position="1197"/>
    </location>
</feature>
<feature type="modified residue" description="Omega-N-methylarginine" evidence="2">
    <location>
        <position position="1199"/>
    </location>
</feature>
<feature type="lipid moiety-binding region" description="S-palmitoyl cysteine" evidence="2">
    <location>
        <position position="1049"/>
    </location>
</feature>
<feature type="lipid moiety-binding region" description="S-palmitoyl cysteine" evidence="2">
    <location>
        <position position="1146"/>
    </location>
</feature>
<feature type="glycosylation site" description="N-linked (GlcNAc...) asparagine" evidence="1">
    <location>
        <position position="128"/>
    </location>
</feature>
<feature type="glycosylation site" description="N-linked (GlcNAc...) asparagine" evidence="1">
    <location>
        <position position="175"/>
    </location>
</feature>
<feature type="glycosylation site" description="N-linked (GlcNAc...) asparagine" evidence="1">
    <location>
        <position position="196"/>
    </location>
</feature>
<feature type="glycosylation site" description="N-linked (GlcNAc...) asparagine" evidence="1">
    <location>
        <position position="352"/>
    </location>
</feature>
<feature type="glycosylation site" description="N-linked (GlcNAc...) asparagine" evidence="1">
    <location>
        <position position="361"/>
    </location>
</feature>
<feature type="glycosylation site" description="N-linked (GlcNAc...) asparagine" evidence="1">
    <location>
        <position position="413"/>
    </location>
</feature>
<feature type="glycosylation site" description="N-linked (GlcNAc...) asparagine" evidence="1">
    <location>
        <position position="444"/>
    </location>
</feature>
<feature type="glycosylation site" description="N-linked (GlcNAc...) asparagine" evidence="1">
    <location>
        <position position="528"/>
    </location>
</feature>
<feature type="glycosylation site" description="N-linked (GlcNAc...) asparagine" evidence="1">
    <location>
        <position position="568"/>
    </location>
</feature>
<feature type="glycosylation site" description="N-linked (GlcNAc...) asparagine" evidence="1">
    <location>
        <position position="603"/>
    </location>
</feature>
<feature type="disulfide bond" evidence="2">
    <location>
        <begin position="31"/>
        <end position="58"/>
    </location>
</feature>
<feature type="disulfide bond" evidence="2">
    <location>
        <begin position="157"/>
        <end position="187"/>
    </location>
</feature>
<feature type="disulfide bond" evidence="2">
    <location>
        <begin position="190"/>
        <end position="199"/>
    </location>
</feature>
<feature type="disulfide bond" evidence="2">
    <location>
        <begin position="194"/>
        <end position="207"/>
    </location>
</feature>
<feature type="disulfide bond" evidence="2">
    <location>
        <begin position="215"/>
        <end position="223"/>
    </location>
</feature>
<feature type="disulfide bond" evidence="2">
    <location>
        <begin position="219"/>
        <end position="231"/>
    </location>
</feature>
<feature type="disulfide bond" evidence="2">
    <location>
        <begin position="232"/>
        <end position="240"/>
    </location>
</feature>
<feature type="disulfide bond" evidence="2">
    <location>
        <begin position="236"/>
        <end position="248"/>
    </location>
</feature>
<feature type="disulfide bond" evidence="2">
    <location>
        <begin position="251"/>
        <end position="260"/>
    </location>
</feature>
<feature type="disulfide bond" evidence="2">
    <location>
        <begin position="264"/>
        <end position="291"/>
    </location>
</feature>
<feature type="disulfide bond" evidence="2">
    <location>
        <begin position="295"/>
        <end position="307"/>
    </location>
</feature>
<feature type="disulfide bond" evidence="2">
    <location>
        <begin position="311"/>
        <end position="326"/>
    </location>
</feature>
<feature type="disulfide bond" evidence="2">
    <location>
        <begin position="329"/>
        <end position="333"/>
    </location>
</feature>
<feature type="disulfide bond" evidence="2">
    <location>
        <begin position="337"/>
        <end position="362"/>
    </location>
</feature>
<feature type="disulfide bond" evidence="2">
    <location>
        <begin position="470"/>
        <end position="499"/>
    </location>
</feature>
<feature type="disulfide bond" evidence="2">
    <location>
        <begin position="506"/>
        <end position="515"/>
    </location>
</feature>
<feature type="disulfide bond" evidence="2">
    <location>
        <begin position="510"/>
        <end position="523"/>
    </location>
</feature>
<feature type="disulfide bond" evidence="2">
    <location>
        <begin position="526"/>
        <end position="535"/>
    </location>
</feature>
<feature type="disulfide bond" evidence="2">
    <location>
        <begin position="539"/>
        <end position="555"/>
    </location>
</feature>
<feature type="disulfide bond" evidence="2">
    <location>
        <begin position="558"/>
        <end position="571"/>
    </location>
</feature>
<feature type="disulfide bond" evidence="2">
    <location>
        <begin position="562"/>
        <end position="579"/>
    </location>
</feature>
<feature type="disulfide bond" evidence="2">
    <location>
        <begin position="582"/>
        <end position="591"/>
    </location>
</feature>
<feature type="disulfide bond" evidence="2">
    <location>
        <begin position="595"/>
        <end position="617"/>
    </location>
</feature>
<feature type="disulfide bond" evidence="2">
    <location>
        <begin position="620"/>
        <end position="628"/>
    </location>
</feature>
<feature type="disulfide bond" evidence="2">
    <location>
        <begin position="624"/>
        <end position="636"/>
    </location>
</feature>
<feature type="cross-link" description="Glycyl lysine isopeptide (Lys-Gly) (interchain with G-Cter in ubiquitin)" evidence="2">
    <location>
        <position position="716"/>
    </location>
</feature>
<feature type="cross-link" description="Glycyl lysine isopeptide (Lys-Gly) (interchain with G-Cter in ubiquitin)" evidence="2">
    <location>
        <position position="737"/>
    </location>
</feature>
<feature type="cross-link" description="Glycyl lysine isopeptide (Lys-Gly) (interchain with G-Cter in ubiquitin)" evidence="2">
    <location>
        <position position="754"/>
    </location>
</feature>
<feature type="cross-link" description="Glycyl lysine isopeptide (Lys-Gly) (interchain with G-Cter in ubiquitin)" evidence="2">
    <location>
        <position position="757"/>
    </location>
</feature>
<feature type="cross-link" description="Glycyl lysine isopeptide (Lys-Gly) (interchain with G-Cter in ubiquitin)" evidence="2">
    <location>
        <position position="867"/>
    </location>
</feature>
<feature type="cross-link" description="Glycyl lysine isopeptide (Lys-Gly) (interchain with G-Cter in ubiquitin)" evidence="2">
    <location>
        <position position="929"/>
    </location>
</feature>
<feature type="cross-link" description="Glycyl lysine isopeptide (Lys-Gly) (interchain with G-Cter in ubiquitin)" evidence="2">
    <location>
        <position position="960"/>
    </location>
</feature>
<feature type="cross-link" description="Glycyl lysine isopeptide (Lys-Gly) (interchain with G-Cter in ubiquitin)" evidence="2">
    <location>
        <position position="970"/>
    </location>
</feature>
<feature type="sequence conflict" description="In Ref. 2; EHH17303." evidence="9" ref="2">
    <original>V</original>
    <variation>I</variation>
    <location>
        <position position="541"/>
    </location>
</feature>
<name>EGFR_MACMU</name>
<protein>
    <recommendedName>
        <fullName>Epidermal growth factor receptor</fullName>
        <ecNumber>2.7.10.1</ecNumber>
    </recommendedName>
</protein>
<dbReference type="EC" id="2.7.10.1"/>
<dbReference type="EMBL" id="JH286850">
    <property type="status" value="NOT_ANNOTATED_CDS"/>
    <property type="molecule type" value="Genomic_DNA"/>
</dbReference>
<dbReference type="EMBL" id="CM001255">
    <property type="protein sequence ID" value="EHH17303.1"/>
    <property type="molecule type" value="Genomic_DNA"/>
</dbReference>
<dbReference type="EMBL" id="JU327815">
    <property type="protein sequence ID" value="AFE71571.1"/>
    <property type="molecule type" value="mRNA"/>
</dbReference>
<dbReference type="EMBL" id="S75916">
    <property type="protein sequence ID" value="AAB33095.1"/>
    <property type="molecule type" value="mRNA"/>
</dbReference>
<dbReference type="PIR" id="I78540">
    <property type="entry name" value="I78540"/>
</dbReference>
<dbReference type="RefSeq" id="XP_014988922.1">
    <property type="nucleotide sequence ID" value="XM_015133436.1"/>
</dbReference>
<dbReference type="BMRB" id="P55245"/>
<dbReference type="SMR" id="P55245"/>
<dbReference type="FunCoup" id="P55245">
    <property type="interactions" value="2928"/>
</dbReference>
<dbReference type="STRING" id="9544.ENSMMUP00000046120"/>
<dbReference type="GlyCosmos" id="P55245">
    <property type="glycosylation" value="10 sites, No reported glycans"/>
</dbReference>
<dbReference type="PaxDb" id="9544-ENSMMUP00000029471"/>
<dbReference type="GeneID" id="613027"/>
<dbReference type="KEGG" id="mcc:613027"/>
<dbReference type="CTD" id="1956"/>
<dbReference type="eggNOG" id="KOG1025">
    <property type="taxonomic scope" value="Eukaryota"/>
</dbReference>
<dbReference type="HOGENOM" id="CLU_003384_0_1_1"/>
<dbReference type="InParanoid" id="P55245"/>
<dbReference type="OrthoDB" id="6219513at2759"/>
<dbReference type="TreeFam" id="TF106002"/>
<dbReference type="Proteomes" id="UP000006718">
    <property type="component" value="Unassembled WGS sequence"/>
</dbReference>
<dbReference type="Proteomes" id="UP000013456">
    <property type="component" value="Chromosome 3"/>
</dbReference>
<dbReference type="GO" id="GO:0009925">
    <property type="term" value="C:basal plasma membrane"/>
    <property type="evidence" value="ECO:0000318"/>
    <property type="project" value="GO_Central"/>
</dbReference>
<dbReference type="GO" id="GO:0005737">
    <property type="term" value="C:cytoplasm"/>
    <property type="evidence" value="ECO:0000250"/>
    <property type="project" value="UniProtKB"/>
</dbReference>
<dbReference type="GO" id="GO:0005789">
    <property type="term" value="C:endoplasmic reticulum membrane"/>
    <property type="evidence" value="ECO:0007669"/>
    <property type="project" value="UniProtKB-SubCell"/>
</dbReference>
<dbReference type="GO" id="GO:0005768">
    <property type="term" value="C:endosome"/>
    <property type="evidence" value="ECO:0000250"/>
    <property type="project" value="UniProtKB"/>
</dbReference>
<dbReference type="GO" id="GO:0010008">
    <property type="term" value="C:endosome membrane"/>
    <property type="evidence" value="ECO:0007669"/>
    <property type="project" value="UniProtKB-SubCell"/>
</dbReference>
<dbReference type="GO" id="GO:0000139">
    <property type="term" value="C:Golgi membrane"/>
    <property type="evidence" value="ECO:0007669"/>
    <property type="project" value="UniProtKB-SubCell"/>
</dbReference>
<dbReference type="GO" id="GO:0031965">
    <property type="term" value="C:nuclear membrane"/>
    <property type="evidence" value="ECO:0007669"/>
    <property type="project" value="UniProtKB-SubCell"/>
</dbReference>
<dbReference type="GO" id="GO:0005634">
    <property type="term" value="C:nucleus"/>
    <property type="evidence" value="ECO:0000250"/>
    <property type="project" value="UniProtKB"/>
</dbReference>
<dbReference type="GO" id="GO:0005886">
    <property type="term" value="C:plasma membrane"/>
    <property type="evidence" value="ECO:0000250"/>
    <property type="project" value="UniProtKB"/>
</dbReference>
<dbReference type="GO" id="GO:0043235">
    <property type="term" value="C:receptor complex"/>
    <property type="evidence" value="ECO:0000318"/>
    <property type="project" value="GO_Central"/>
</dbReference>
<dbReference type="GO" id="GO:0005524">
    <property type="term" value="F:ATP binding"/>
    <property type="evidence" value="ECO:0007669"/>
    <property type="project" value="UniProtKB-KW"/>
</dbReference>
<dbReference type="GO" id="GO:0003682">
    <property type="term" value="F:chromatin binding"/>
    <property type="evidence" value="ECO:0000250"/>
    <property type="project" value="UniProtKB"/>
</dbReference>
<dbReference type="GO" id="GO:0048408">
    <property type="term" value="F:epidermal growth factor binding"/>
    <property type="evidence" value="ECO:0000318"/>
    <property type="project" value="GO_Central"/>
</dbReference>
<dbReference type="GO" id="GO:0004713">
    <property type="term" value="F:protein tyrosine kinase activity"/>
    <property type="evidence" value="ECO:0000250"/>
    <property type="project" value="UniProtKB"/>
</dbReference>
<dbReference type="GO" id="GO:0004714">
    <property type="term" value="F:transmembrane receptor protein tyrosine kinase activity"/>
    <property type="evidence" value="ECO:0000318"/>
    <property type="project" value="GO_Central"/>
</dbReference>
<dbReference type="GO" id="GO:0071364">
    <property type="term" value="P:cellular response to epidermal growth factor stimulus"/>
    <property type="evidence" value="ECO:0000250"/>
    <property type="project" value="UniProtKB"/>
</dbReference>
<dbReference type="GO" id="GO:0071392">
    <property type="term" value="P:cellular response to estradiol stimulus"/>
    <property type="evidence" value="ECO:0000250"/>
    <property type="project" value="UniProtKB"/>
</dbReference>
<dbReference type="GO" id="GO:0007173">
    <property type="term" value="P:epidermal growth factor receptor signaling pathway"/>
    <property type="evidence" value="ECO:0000250"/>
    <property type="project" value="UniProtKB"/>
</dbReference>
<dbReference type="GO" id="GO:0007611">
    <property type="term" value="P:learning or memory"/>
    <property type="evidence" value="ECO:0000250"/>
    <property type="project" value="UniProtKB"/>
</dbReference>
<dbReference type="GO" id="GO:0043066">
    <property type="term" value="P:negative regulation of apoptotic process"/>
    <property type="evidence" value="ECO:0000318"/>
    <property type="project" value="GO_Central"/>
</dbReference>
<dbReference type="GO" id="GO:0030182">
    <property type="term" value="P:neuron differentiation"/>
    <property type="evidence" value="ECO:0000318"/>
    <property type="project" value="GO_Central"/>
</dbReference>
<dbReference type="GO" id="GO:0030307">
    <property type="term" value="P:positive regulation of cell growth"/>
    <property type="evidence" value="ECO:0000250"/>
    <property type="project" value="UniProtKB"/>
</dbReference>
<dbReference type="GO" id="GO:0050679">
    <property type="term" value="P:positive regulation of epithelial cell proliferation"/>
    <property type="evidence" value="ECO:0000318"/>
    <property type="project" value="GO_Central"/>
</dbReference>
<dbReference type="GO" id="GO:0070374">
    <property type="term" value="P:positive regulation of ERK1 and ERK2 cascade"/>
    <property type="evidence" value="ECO:0000250"/>
    <property type="project" value="UniProtKB"/>
</dbReference>
<dbReference type="GO" id="GO:0043410">
    <property type="term" value="P:positive regulation of MAPK cascade"/>
    <property type="evidence" value="ECO:0000318"/>
    <property type="project" value="GO_Central"/>
</dbReference>
<dbReference type="GO" id="GO:1902966">
    <property type="term" value="P:positive regulation of protein localization to early endosome"/>
    <property type="evidence" value="ECO:0000250"/>
    <property type="project" value="UniProtKB"/>
</dbReference>
<dbReference type="GO" id="GO:0001934">
    <property type="term" value="P:positive regulation of protein phosphorylation"/>
    <property type="evidence" value="ECO:0000250"/>
    <property type="project" value="UniProtKB"/>
</dbReference>
<dbReference type="GO" id="GO:0045944">
    <property type="term" value="P:positive regulation of transcription by RNA polymerase II"/>
    <property type="evidence" value="ECO:0000250"/>
    <property type="project" value="UniProtKB"/>
</dbReference>
<dbReference type="CDD" id="cd00064">
    <property type="entry name" value="FU"/>
    <property type="match status" value="3"/>
</dbReference>
<dbReference type="CDD" id="cd05108">
    <property type="entry name" value="PTKc_EGFR"/>
    <property type="match status" value="1"/>
</dbReference>
<dbReference type="CDD" id="cd12093">
    <property type="entry name" value="TM_ErbB1"/>
    <property type="match status" value="1"/>
</dbReference>
<dbReference type="FunFam" id="1.10.510.10:FF:000027">
    <property type="entry name" value="Receptor protein-tyrosine kinase"/>
    <property type="match status" value="1"/>
</dbReference>
<dbReference type="FunFam" id="2.10.220.10:FF:000001">
    <property type="entry name" value="Receptor protein-tyrosine kinase"/>
    <property type="match status" value="1"/>
</dbReference>
<dbReference type="FunFam" id="2.10.220.10:FF:000008">
    <property type="entry name" value="Receptor protein-tyrosine kinase"/>
    <property type="match status" value="1"/>
</dbReference>
<dbReference type="FunFam" id="3.30.200.20:FF:000044">
    <property type="entry name" value="Receptor protein-tyrosine kinase"/>
    <property type="match status" value="1"/>
</dbReference>
<dbReference type="FunFam" id="3.80.20.20:FF:000005">
    <property type="entry name" value="Receptor protein-tyrosine kinase"/>
    <property type="match status" value="1"/>
</dbReference>
<dbReference type="FunFam" id="3.80.20.20:FF:000006">
    <property type="entry name" value="Receptor protein-tyrosine kinase"/>
    <property type="match status" value="1"/>
</dbReference>
<dbReference type="Gene3D" id="2.10.220.10">
    <property type="entry name" value="Hormone Receptor, Insulin-like Growth Factor Receptor 1, Chain A, domain 2"/>
    <property type="match status" value="3"/>
</dbReference>
<dbReference type="Gene3D" id="1.20.5.420">
    <property type="entry name" value="Immunoglobulin FC, subunit C"/>
    <property type="match status" value="1"/>
</dbReference>
<dbReference type="Gene3D" id="3.30.200.20">
    <property type="entry name" value="Phosphorylase Kinase, domain 1"/>
    <property type="match status" value="1"/>
</dbReference>
<dbReference type="Gene3D" id="3.80.20.20">
    <property type="entry name" value="Receptor L-domain"/>
    <property type="match status" value="2"/>
</dbReference>
<dbReference type="Gene3D" id="1.10.510.10">
    <property type="entry name" value="Transferase(Phosphotransferase) domain 1"/>
    <property type="match status" value="1"/>
</dbReference>
<dbReference type="InterPro" id="IPR006211">
    <property type="entry name" value="Furin-like_Cys-rich_dom"/>
</dbReference>
<dbReference type="InterPro" id="IPR006212">
    <property type="entry name" value="Furin_repeat"/>
</dbReference>
<dbReference type="InterPro" id="IPR032778">
    <property type="entry name" value="GF_recep_IV"/>
</dbReference>
<dbReference type="InterPro" id="IPR009030">
    <property type="entry name" value="Growth_fac_rcpt_cys_sf"/>
</dbReference>
<dbReference type="InterPro" id="IPR011009">
    <property type="entry name" value="Kinase-like_dom_sf"/>
</dbReference>
<dbReference type="InterPro" id="IPR000719">
    <property type="entry name" value="Prot_kinase_dom"/>
</dbReference>
<dbReference type="InterPro" id="IPR017441">
    <property type="entry name" value="Protein_kinase_ATP_BS"/>
</dbReference>
<dbReference type="InterPro" id="IPR000494">
    <property type="entry name" value="Rcpt_L-dom"/>
</dbReference>
<dbReference type="InterPro" id="IPR036941">
    <property type="entry name" value="Rcpt_L-dom_sf"/>
</dbReference>
<dbReference type="InterPro" id="IPR050122">
    <property type="entry name" value="RTK"/>
</dbReference>
<dbReference type="InterPro" id="IPR001245">
    <property type="entry name" value="Ser-Thr/Tyr_kinase_cat_dom"/>
</dbReference>
<dbReference type="InterPro" id="IPR049328">
    <property type="entry name" value="TM_ErbB1"/>
</dbReference>
<dbReference type="InterPro" id="IPR008266">
    <property type="entry name" value="Tyr_kinase_AS"/>
</dbReference>
<dbReference type="InterPro" id="IPR020635">
    <property type="entry name" value="Tyr_kinase_cat_dom"/>
</dbReference>
<dbReference type="InterPro" id="IPR016245">
    <property type="entry name" value="Tyr_kinase_EGF/ERB/XmrK_rcpt"/>
</dbReference>
<dbReference type="PANTHER" id="PTHR24416:SF91">
    <property type="entry name" value="EPIDERMAL GROWTH FACTOR RECEPTOR"/>
    <property type="match status" value="1"/>
</dbReference>
<dbReference type="PANTHER" id="PTHR24416">
    <property type="entry name" value="TYROSINE-PROTEIN KINASE RECEPTOR"/>
    <property type="match status" value="1"/>
</dbReference>
<dbReference type="Pfam" id="PF00757">
    <property type="entry name" value="Furin-like"/>
    <property type="match status" value="1"/>
</dbReference>
<dbReference type="Pfam" id="PF14843">
    <property type="entry name" value="GF_recep_IV"/>
    <property type="match status" value="1"/>
</dbReference>
<dbReference type="Pfam" id="PF07714">
    <property type="entry name" value="PK_Tyr_Ser-Thr"/>
    <property type="match status" value="1"/>
</dbReference>
<dbReference type="Pfam" id="PF01030">
    <property type="entry name" value="Recep_L_domain"/>
    <property type="match status" value="2"/>
</dbReference>
<dbReference type="Pfam" id="PF21314">
    <property type="entry name" value="TM_ErbB1"/>
    <property type="match status" value="1"/>
</dbReference>
<dbReference type="PIRSF" id="PIRSF000619">
    <property type="entry name" value="TyrPK_EGF-R"/>
    <property type="match status" value="1"/>
</dbReference>
<dbReference type="PRINTS" id="PR00109">
    <property type="entry name" value="TYRKINASE"/>
</dbReference>
<dbReference type="SMART" id="SM00261">
    <property type="entry name" value="FU"/>
    <property type="match status" value="4"/>
</dbReference>
<dbReference type="SMART" id="SM00219">
    <property type="entry name" value="TyrKc"/>
    <property type="match status" value="1"/>
</dbReference>
<dbReference type="SUPFAM" id="SSF57184">
    <property type="entry name" value="Growth factor receptor domain"/>
    <property type="match status" value="2"/>
</dbReference>
<dbReference type="SUPFAM" id="SSF52058">
    <property type="entry name" value="L domain-like"/>
    <property type="match status" value="2"/>
</dbReference>
<dbReference type="SUPFAM" id="SSF56112">
    <property type="entry name" value="Protein kinase-like (PK-like)"/>
    <property type="match status" value="1"/>
</dbReference>
<dbReference type="PROSITE" id="PS00107">
    <property type="entry name" value="PROTEIN_KINASE_ATP"/>
    <property type="match status" value="1"/>
</dbReference>
<dbReference type="PROSITE" id="PS50011">
    <property type="entry name" value="PROTEIN_KINASE_DOM"/>
    <property type="match status" value="1"/>
</dbReference>
<dbReference type="PROSITE" id="PS00109">
    <property type="entry name" value="PROTEIN_KINASE_TYR"/>
    <property type="match status" value="1"/>
</dbReference>
<reference key="1">
    <citation type="journal article" date="2007" name="Science">
        <title>Evolutionary and biomedical insights from the rhesus macaque genome.</title>
        <authorList>
            <person name="Gibbs R.A."/>
            <person name="Rogers J."/>
            <person name="Katze M.G."/>
            <person name="Bumgarner R."/>
            <person name="Weinstock G.M."/>
            <person name="Mardis E.R."/>
            <person name="Remington K.A."/>
            <person name="Strausberg R.L."/>
            <person name="Venter J.C."/>
            <person name="Wilson R.K."/>
            <person name="Batzer M.A."/>
            <person name="Bustamante C.D."/>
            <person name="Eichler E.E."/>
            <person name="Hahn M.W."/>
            <person name="Hardison R.C."/>
            <person name="Makova K.D."/>
            <person name="Miller W."/>
            <person name="Milosavljevic A."/>
            <person name="Palermo R.E."/>
            <person name="Siepel A."/>
            <person name="Sikela J.M."/>
            <person name="Attaway T."/>
            <person name="Bell S."/>
            <person name="Bernard K.E."/>
            <person name="Buhay C.J."/>
            <person name="Chandrabose M.N."/>
            <person name="Dao M."/>
            <person name="Davis C."/>
            <person name="Delehaunty K.D."/>
            <person name="Ding Y."/>
            <person name="Dinh H.H."/>
            <person name="Dugan-Rocha S."/>
            <person name="Fulton L.A."/>
            <person name="Gabisi R.A."/>
            <person name="Garner T.T."/>
            <person name="Godfrey J."/>
            <person name="Hawes A.C."/>
            <person name="Hernandez J."/>
            <person name="Hines S."/>
            <person name="Holder M."/>
            <person name="Hume J."/>
            <person name="Jhangiani S.N."/>
            <person name="Joshi V."/>
            <person name="Khan Z.M."/>
            <person name="Kirkness E.F."/>
            <person name="Cree A."/>
            <person name="Fowler R.G."/>
            <person name="Lee S."/>
            <person name="Lewis L.R."/>
            <person name="Li Z."/>
            <person name="Liu Y.-S."/>
            <person name="Moore S.M."/>
            <person name="Muzny D."/>
            <person name="Nazareth L.V."/>
            <person name="Ngo D.N."/>
            <person name="Okwuonu G.O."/>
            <person name="Pai G."/>
            <person name="Parker D."/>
            <person name="Paul H.A."/>
            <person name="Pfannkoch C."/>
            <person name="Pohl C.S."/>
            <person name="Rogers Y.-H.C."/>
            <person name="Ruiz S.J."/>
            <person name="Sabo A."/>
            <person name="Santibanez J."/>
            <person name="Schneider B.W."/>
            <person name="Smith S.M."/>
            <person name="Sodergren E."/>
            <person name="Svatek A.F."/>
            <person name="Utterback T.R."/>
            <person name="Vattathil S."/>
            <person name="Warren W."/>
            <person name="White C.S."/>
            <person name="Chinwalla A.T."/>
            <person name="Feng Y."/>
            <person name="Halpern A.L."/>
            <person name="Hillier L.W."/>
            <person name="Huang X."/>
            <person name="Minx P."/>
            <person name="Nelson J.O."/>
            <person name="Pepin K.H."/>
            <person name="Qin X."/>
            <person name="Sutton G.G."/>
            <person name="Venter E."/>
            <person name="Walenz B.P."/>
            <person name="Wallis J.W."/>
            <person name="Worley K.C."/>
            <person name="Yang S.-P."/>
            <person name="Jones S.M."/>
            <person name="Marra M.A."/>
            <person name="Rocchi M."/>
            <person name="Schein J.E."/>
            <person name="Baertsch R."/>
            <person name="Clarke L."/>
            <person name="Csuros M."/>
            <person name="Glasscock J."/>
            <person name="Harris R.A."/>
            <person name="Havlak P."/>
            <person name="Jackson A.R."/>
            <person name="Jiang H."/>
            <person name="Liu Y."/>
            <person name="Messina D.N."/>
            <person name="Shen Y."/>
            <person name="Song H.X.-Z."/>
            <person name="Wylie T."/>
            <person name="Zhang L."/>
            <person name="Birney E."/>
            <person name="Han K."/>
            <person name="Konkel M.K."/>
            <person name="Lee J."/>
            <person name="Smit A.F.A."/>
            <person name="Ullmer B."/>
            <person name="Wang H."/>
            <person name="Xing J."/>
            <person name="Burhans R."/>
            <person name="Cheng Z."/>
            <person name="Karro J.E."/>
            <person name="Ma J."/>
            <person name="Raney B."/>
            <person name="She X."/>
            <person name="Cox M.J."/>
            <person name="Demuth J.P."/>
            <person name="Dumas L.J."/>
            <person name="Han S.-G."/>
            <person name="Hopkins J."/>
            <person name="Karimpour-Fard A."/>
            <person name="Kim Y.H."/>
            <person name="Pollack J.R."/>
            <person name="Vinar T."/>
            <person name="Addo-Quaye C."/>
            <person name="Degenhardt J."/>
            <person name="Denby A."/>
            <person name="Hubisz M.J."/>
            <person name="Indap A."/>
            <person name="Kosiol C."/>
            <person name="Lahn B.T."/>
            <person name="Lawson H.A."/>
            <person name="Marklein A."/>
            <person name="Nielsen R."/>
            <person name="Vallender E.J."/>
            <person name="Clark A.G."/>
            <person name="Ferguson B."/>
            <person name="Hernandez R.D."/>
            <person name="Hirani K."/>
            <person name="Kehrer-Sawatzki H."/>
            <person name="Kolb J."/>
            <person name="Patil S."/>
            <person name="Pu L.-L."/>
            <person name="Ren Y."/>
            <person name="Smith D.G."/>
            <person name="Wheeler D.A."/>
            <person name="Schenck I."/>
            <person name="Ball E.V."/>
            <person name="Chen R."/>
            <person name="Cooper D.N."/>
            <person name="Giardine B."/>
            <person name="Hsu F."/>
            <person name="Kent W.J."/>
            <person name="Lesk A."/>
            <person name="Nelson D.L."/>
            <person name="O'brien W.E."/>
            <person name="Pruefer K."/>
            <person name="Stenson P.D."/>
            <person name="Wallace J.C."/>
            <person name="Ke H."/>
            <person name="Liu X.-M."/>
            <person name="Wang P."/>
            <person name="Xiang A.P."/>
            <person name="Yang F."/>
            <person name="Barber G.P."/>
            <person name="Haussler D."/>
            <person name="Karolchik D."/>
            <person name="Kern A.D."/>
            <person name="Kuhn R.M."/>
            <person name="Smith K.E."/>
            <person name="Zwieg A.S."/>
        </authorList>
    </citation>
    <scope>NUCLEOTIDE SEQUENCE [LARGE SCALE GENOMIC DNA]</scope>
    <source>
        <strain>17573</strain>
    </source>
</reference>
<reference key="2">
    <citation type="journal article" date="2011" name="Nat. Biotechnol.">
        <title>Genome sequencing and comparison of two nonhuman primate animal models, the cynomolgus and Chinese rhesus macaques.</title>
        <authorList>
            <person name="Yan G."/>
            <person name="Zhang G."/>
            <person name="Fang X."/>
            <person name="Zhang Y."/>
            <person name="Li C."/>
            <person name="Ling F."/>
            <person name="Cooper D.N."/>
            <person name="Li Q."/>
            <person name="Li Y."/>
            <person name="van Gool A.J."/>
            <person name="Du H."/>
            <person name="Chen J."/>
            <person name="Chen R."/>
            <person name="Zhang P."/>
            <person name="Huang Z."/>
            <person name="Thompson J.R."/>
            <person name="Meng Y."/>
            <person name="Bai Y."/>
            <person name="Wang J."/>
            <person name="Zhuo M."/>
            <person name="Wang T."/>
            <person name="Huang Y."/>
            <person name="Wei L."/>
            <person name="Li J."/>
            <person name="Wang Z."/>
            <person name="Hu H."/>
            <person name="Yang P."/>
            <person name="Le L."/>
            <person name="Stenson P.D."/>
            <person name="Li B."/>
            <person name="Liu X."/>
            <person name="Ball E.V."/>
            <person name="An N."/>
            <person name="Huang Q."/>
            <person name="Zhang Y."/>
            <person name="Fan W."/>
            <person name="Zhang X."/>
            <person name="Li Y."/>
            <person name="Wang W."/>
            <person name="Katze M.G."/>
            <person name="Su B."/>
            <person name="Nielsen R."/>
            <person name="Yang H."/>
            <person name="Wang J."/>
            <person name="Wang X."/>
            <person name="Wang J."/>
        </authorList>
    </citation>
    <scope>NUCLEOTIDE SEQUENCE [LARGE SCALE GENOMIC DNA]</scope>
</reference>
<reference key="3">
    <citation type="submission" date="2012-02" db="EMBL/GenBank/DDBJ databases">
        <title>De novo assembly of the rhesus macaque transcriptome from NextGen mRNA sequences.</title>
        <authorList>
            <person name="Pandey S."/>
            <person name="Maudhoo M.D."/>
            <person name="Guda C."/>
            <person name="Ferguson B."/>
            <person name="Fox H."/>
            <person name="Norgren R.B."/>
        </authorList>
    </citation>
    <scope>NUCLEOTIDE SEQUENCE [LARGE SCALE MRNA] OF 30-1210</scope>
    <source>
        <tissue>Caudate nucleus</tissue>
    </source>
</reference>
<reference key="4">
    <citation type="journal article" date="1994" name="Neuroendocrinology">
        <title>Developmental expression of the genes encoding transforming growth factor alpha and its receptor in the hypothalamus of female rhesus macaques.</title>
        <authorList>
            <person name="Ma Y.J."/>
            <person name="Costa M.E."/>
            <person name="Ojeda S.R."/>
        </authorList>
    </citation>
    <scope>NUCLEOTIDE SEQUENCE [MRNA] OF 893-977</scope>
    <scope>TISSUE SPECIFICITY</scope>
    <scope>DEVELOPMENTAL STAGE</scope>
    <source>
        <tissue>Hypothalamus</tissue>
    </source>
</reference>
<evidence type="ECO:0000250" key="1"/>
<evidence type="ECO:0000250" key="2">
    <source>
        <dbReference type="UniProtKB" id="P00533"/>
    </source>
</evidence>
<evidence type="ECO:0000250" key="3">
    <source>
        <dbReference type="UniProtKB" id="Q01279"/>
    </source>
</evidence>
<evidence type="ECO:0000255" key="4"/>
<evidence type="ECO:0000255" key="5">
    <source>
        <dbReference type="PROSITE-ProRule" id="PRU00159"/>
    </source>
</evidence>
<evidence type="ECO:0000255" key="6">
    <source>
        <dbReference type="PROSITE-ProRule" id="PRU10028"/>
    </source>
</evidence>
<evidence type="ECO:0000256" key="7">
    <source>
        <dbReference type="SAM" id="MobiDB-lite"/>
    </source>
</evidence>
<evidence type="ECO:0000269" key="8">
    <source>
    </source>
</evidence>
<evidence type="ECO:0000305" key="9"/>
<comment type="function">
    <text evidence="2 3">Receptor tyrosine kinase binding ligands of the EGF family and activating several signaling cascades to convert extracellular cues into appropriate cellular responses. Known ligands include EGF, TGFA/TGF-alpha, AREG, epigen/EPGN, BTC/betacellulin, epiregulin/EREG and HBEGF/heparin-binding EGF. Ligand binding triggers receptor homo- and/or heterodimerization and autophosphorylation on key cytoplasmic residues. The phosphorylated receptor recruits adapter proteins like GRB2 which in turn activates complex downstream signaling cascades. Activates at least 4 major downstream signaling cascades including the RAS-RAF-MEK-ERK, PI3 kinase-AKT, PLCgamma-PKC and STATs modules. May also activate the NF-kappa-B signaling cascade. Also directly phosphorylates other proteins like RGS16, activating its GTPase activity and probably coupling the EGF receptor signaling to the G protein-coupled receptor signaling. Also phosphorylates MUC1 and increases its interaction with SRC and CTNNB1/beta-catenin (By similarity). Positively regulates cell migration via interaction with CCDC88A/GIV which retains EGFR at the cell membrane following ligand stimulation, promoting EGFR signaling which triggers cell migration (By similarity). Plays a role in enhancing learning and memory performance (By similarity). Plays a role in mammalian pain signaling (long-lasting hypersensitivity) (By similarity).</text>
</comment>
<comment type="catalytic activity">
    <reaction evidence="6">
        <text>L-tyrosyl-[protein] + ATP = O-phospho-L-tyrosyl-[protein] + ADP + H(+)</text>
        <dbReference type="Rhea" id="RHEA:10596"/>
        <dbReference type="Rhea" id="RHEA-COMP:10136"/>
        <dbReference type="Rhea" id="RHEA-COMP:20101"/>
        <dbReference type="ChEBI" id="CHEBI:15378"/>
        <dbReference type="ChEBI" id="CHEBI:30616"/>
        <dbReference type="ChEBI" id="CHEBI:46858"/>
        <dbReference type="ChEBI" id="CHEBI:61978"/>
        <dbReference type="ChEBI" id="CHEBI:456216"/>
        <dbReference type="EC" id="2.7.10.1"/>
    </reaction>
</comment>
<comment type="activity regulation">
    <text>Endocytosis and inhibition of the activated EGFR by phosphatases like PTPRJ and PTPRK constitute immediate regulatory mechanisms. Upon EGF-binding phosphorylates EPS15 that regulates EGFR endocytosis and activity. Moreover, inducible feedback inhibitors including LRIG1, SOCS4, SOCS5 and ERRFI1 constitute alternative regulatory mechanisms for the EGFR signaling.</text>
</comment>
<comment type="subunit">
    <text evidence="2 3">Binding of the ligand triggers homo- and/or heterodimerization of the receptor triggering its autophosphorylation. Heterodimer with ERBB2. Forms a complex with CCDC88A/GIV (via SH2-like regions) and GNAI3 which leads to enhanced EGFR signaling and triggering of cell migration; binding to CCDC88A requires autophosphorylation of the EGFR C-terminal region, and ligand stimulation is required for recruitment of GNAI3 to the complex. Interacts with ERRFI1; inhibits dimerization of the kinase domain and autophosphorylation. Part of a complex with ERBB2 and either PIK3C2A or PIK3C2B. Interacts with GRB2; an adapter protein coupling the receptor to downstream signaling pathways. Interacts with GAB2; involved in signaling downstream of EGFR. Interacts with STAT3; mediates EGFR downstream signaling in cell proliferation. Interacts with RIPK1; involved in NF-kappa-B activation. Interacts (autophosphorylated) with CBL, CBLB and CBLC; involved in EGFR ubiquitination and regulation; interaction with CBL is reduced in the presence of tensin TNS4. Interacts with SOCS5; regulates EGFR degradation through ELOC- and ELOB-mediated ubiquitination and proteasomal degradation. Interacts with PRMT5; methylates EGFR and enhances interaction with PTPN6. Interacts (phosphorylated) with PTPN6; inhibits EGFR-dependent activation of MAPK/ERK. Interacts with COPG1; essential for regulation of EGF-dependent nuclear transport of EGFR by retrograde trafficking from the Golgi to the ER. Interacts with TNK2; this interaction is dependent on EGF stimulation and kinase activity of EGFR. Interacts with PCNA; positively regulates PCNA. Interacts with PELP1. Interacts with MUC1. Interacts with AP2M1. Interacts with FER. May interact with EPS8; mediates EPS8 phosphorylation. Interacts (via SH2 domains) with GRB2, NCK1 and NCK2. Interacts with ATXN2. Interacts with GAREM1. Interacts (ubiquitinated) with ANKRD13A/B/D; the interaction is direct and may regulate EGFR internalization after EGF stimulation. Interacts with GPER1; the interaction occurs in an estrogen-dependent manner. Interacts (via C-terminal cytoplasmic kinase domain) with ZPR1 (via zinc fingers). Interacts with RNF115 and RNF126. Interacts with GPRC5A (via its transmembrane domain). Interacts with FAM83B; positively regulates EGFR inducing its autophosphorylation in absence of stimulation by EGF. Interacts with LAPTM4B; positively correlates with EGFR activation. Interacts with STX19. Interacts with CD44. Interacts with PGRMC1; the interaction requires PGRMC1 homodimerization. Interacts with PIKFYVE. Interacts with NEU3. Interacts with TRAF4. Interacts with the ant venom OMEGA-myrmeciitoxin(02)-Mg1a. Interacts with CD82; this interaction facilitates ligand-induced endocytosis of the receptor and its subsequent desensitization.</text>
</comment>
<comment type="subcellular location">
    <subcellularLocation>
        <location evidence="2">Cell membrane</location>
        <topology evidence="2">Single-pass type I membrane protein</topology>
    </subcellularLocation>
    <subcellularLocation>
        <location evidence="2">Endoplasmic reticulum membrane</location>
        <topology evidence="2">Single-pass type I membrane protein</topology>
    </subcellularLocation>
    <subcellularLocation>
        <location evidence="2">Golgi apparatus membrane</location>
        <topology evidence="2">Single-pass type I membrane protein</topology>
    </subcellularLocation>
    <subcellularLocation>
        <location evidence="2">Nucleus membrane</location>
        <topology evidence="2">Single-pass type I membrane protein</topology>
    </subcellularLocation>
    <subcellularLocation>
        <location evidence="2">Endosome</location>
    </subcellularLocation>
    <subcellularLocation>
        <location evidence="2">Endosome membrane</location>
    </subcellularLocation>
    <subcellularLocation>
        <location evidence="2">Nucleus</location>
    </subcellularLocation>
    <text evidence="2">In response to EGF, translocated from the cell membrane to the nucleus via Golgi and ER. Endocytosed upon activation by ligand. Colocalized with GPER1 in the nucleus of estrogen agonist-induced cancer-associated fibroblasts (CAF).</text>
</comment>
<comment type="tissue specificity">
    <text evidence="8">Hypothalamus.</text>
</comment>
<comment type="developmental stage">
    <text evidence="8">Levels in the medial basal hypothalamus and preoptic area are elevated during neonatal life (1 week-6 months), decrease during juvenile development (8-18 months) and markedly increase during the expected time of puberty (30-36 months).</text>
</comment>
<comment type="PTM">
    <text evidence="2">Phosphorylated on Tyr residues in response to EGF. Phosphorylation at Ser-695 is partial and occurs only if Thr-693 is phosphorylated. Phosphorylation at Thr-678 and Thr-693 by PRKD1 inhibits EGF-induced MAPK8/JNK1 activation. Dephosphorylation by PTPRJ prevents endocytosis and stabilizes the receptor at the plasma membrane. Autophosphorylation at Tyr-1197 is stimulated by methylation at Arg-1199 and enhances interaction with PTPN6. Autophosphorylation at Tyr-1092 and/or Tyr-1110 recruits STAT3. Dephosphorylated by PTPN1 and PTPN2.</text>
</comment>
<comment type="PTM">
    <text evidence="2 3">Monoubiquitinated and polyubiquitinated upon EGF stimulation; which does not affect tyrosine kinase activity or signaling capacity but may play a role in lysosomal targeting (By similarity). Polyubiquitin linkage is mainly through 'Lys-63', but linkage through 'Lys-48', 'Lys-11' and 'Lys-29' also occurs. Deubiquitination by OTUD7B prevents degradation. Ubiquitinated by RNF115 and RNF126 (By similarity). Ubiquitinated by ZNRF1 or CBL at different lysines in response to EGF stimulation; leading to recruitment of the ESCRT machinery and subsequent degradation in the lysosomes (By similarity). Deubiquitinated by UCHL1 leading to the inhibition of its degradation (By similarity).</text>
</comment>
<comment type="PTM">
    <text evidence="2">Palmitoylated on Cys residues by ZDHHC20. Palmitoylation inhibits internalization after ligand binding, and increases the persistence of tyrosine-phosphorylated EGFR at the cell membrane. Palmitoylation increases the amplitude and duration of EGFR signaling.</text>
</comment>
<comment type="PTM">
    <text evidence="2">Methylated. Methylation at Arg-1199 by PRMT5 stimulates phosphorylation at Tyr-1197.</text>
</comment>
<comment type="similarity">
    <text evidence="5">Belongs to the protein kinase superfamily. Tyr protein kinase family. EGF receptor subfamily.</text>
</comment>